<feature type="chain" id="PRO_1000005465" description="Large ribosomal subunit protein uL10">
    <location>
        <begin position="1"/>
        <end position="197"/>
    </location>
</feature>
<feature type="region of interest" description="Disordered" evidence="2">
    <location>
        <begin position="162"/>
        <end position="197"/>
    </location>
</feature>
<feature type="compositionally biased region" description="Low complexity" evidence="2">
    <location>
        <begin position="163"/>
        <end position="197"/>
    </location>
</feature>
<reference key="1">
    <citation type="journal article" date="2006" name="PLoS Genet.">
        <title>Secrets of soil survival revealed by the genome sequence of Arthrobacter aurescens TC1.</title>
        <authorList>
            <person name="Mongodin E.F."/>
            <person name="Shapir N."/>
            <person name="Daugherty S.C."/>
            <person name="DeBoy R.T."/>
            <person name="Emerson J.B."/>
            <person name="Shvartzbeyn A."/>
            <person name="Radune D."/>
            <person name="Vamathevan J."/>
            <person name="Riggs F."/>
            <person name="Grinberg V."/>
            <person name="Khouri H.M."/>
            <person name="Wackett L.P."/>
            <person name="Nelson K.E."/>
            <person name="Sadowsky M.J."/>
        </authorList>
    </citation>
    <scope>NUCLEOTIDE SEQUENCE [LARGE SCALE GENOMIC DNA]</scope>
    <source>
        <strain>TC1</strain>
    </source>
</reference>
<comment type="function">
    <text evidence="1">Forms part of the ribosomal stalk, playing a central role in the interaction of the ribosome with GTP-bound translation factors.</text>
</comment>
<comment type="subunit">
    <text evidence="1">Part of the ribosomal stalk of the 50S ribosomal subunit. The N-terminus interacts with L11 and the large rRNA to form the base of the stalk. The C-terminus forms an elongated spine to which L12 dimers bind in a sequential fashion forming a multimeric L10(L12)X complex.</text>
</comment>
<comment type="similarity">
    <text evidence="1">Belongs to the universal ribosomal protein uL10 family.</text>
</comment>
<evidence type="ECO:0000255" key="1">
    <source>
        <dbReference type="HAMAP-Rule" id="MF_00362"/>
    </source>
</evidence>
<evidence type="ECO:0000256" key="2">
    <source>
        <dbReference type="SAM" id="MobiDB-lite"/>
    </source>
</evidence>
<evidence type="ECO:0000305" key="3"/>
<dbReference type="EMBL" id="CP000474">
    <property type="protein sequence ID" value="ABM07546.1"/>
    <property type="molecule type" value="Genomic_DNA"/>
</dbReference>
<dbReference type="RefSeq" id="WP_011775605.1">
    <property type="nucleotide sequence ID" value="NC_008711.1"/>
</dbReference>
<dbReference type="SMR" id="A1R8V8"/>
<dbReference type="STRING" id="290340.AAur_2961"/>
<dbReference type="KEGG" id="aau:AAur_2961"/>
<dbReference type="eggNOG" id="COG0244">
    <property type="taxonomic scope" value="Bacteria"/>
</dbReference>
<dbReference type="HOGENOM" id="CLU_092227_1_0_11"/>
<dbReference type="OrthoDB" id="3186107at2"/>
<dbReference type="Proteomes" id="UP000000637">
    <property type="component" value="Chromosome"/>
</dbReference>
<dbReference type="GO" id="GO:0015934">
    <property type="term" value="C:large ribosomal subunit"/>
    <property type="evidence" value="ECO:0007669"/>
    <property type="project" value="InterPro"/>
</dbReference>
<dbReference type="GO" id="GO:0070180">
    <property type="term" value="F:large ribosomal subunit rRNA binding"/>
    <property type="evidence" value="ECO:0007669"/>
    <property type="project" value="UniProtKB-UniRule"/>
</dbReference>
<dbReference type="GO" id="GO:0003735">
    <property type="term" value="F:structural constituent of ribosome"/>
    <property type="evidence" value="ECO:0007669"/>
    <property type="project" value="InterPro"/>
</dbReference>
<dbReference type="GO" id="GO:0006412">
    <property type="term" value="P:translation"/>
    <property type="evidence" value="ECO:0007669"/>
    <property type="project" value="UniProtKB-UniRule"/>
</dbReference>
<dbReference type="CDD" id="cd05797">
    <property type="entry name" value="Ribosomal_L10"/>
    <property type="match status" value="1"/>
</dbReference>
<dbReference type="Gene3D" id="3.30.70.1730">
    <property type="match status" value="1"/>
</dbReference>
<dbReference type="HAMAP" id="MF_00362">
    <property type="entry name" value="Ribosomal_uL10"/>
    <property type="match status" value="1"/>
</dbReference>
<dbReference type="InterPro" id="IPR001790">
    <property type="entry name" value="Ribosomal_uL10"/>
</dbReference>
<dbReference type="InterPro" id="IPR043141">
    <property type="entry name" value="Ribosomal_uL10-like_sf"/>
</dbReference>
<dbReference type="InterPro" id="IPR022973">
    <property type="entry name" value="Ribosomal_uL10_bac"/>
</dbReference>
<dbReference type="InterPro" id="IPR047865">
    <property type="entry name" value="Ribosomal_uL10_bac_type"/>
</dbReference>
<dbReference type="InterPro" id="IPR002363">
    <property type="entry name" value="Ribosomal_uL10_CS_bac"/>
</dbReference>
<dbReference type="NCBIfam" id="NF000955">
    <property type="entry name" value="PRK00099.1-1"/>
    <property type="match status" value="1"/>
</dbReference>
<dbReference type="PANTHER" id="PTHR11560">
    <property type="entry name" value="39S RIBOSOMAL PROTEIN L10, MITOCHONDRIAL"/>
    <property type="match status" value="1"/>
</dbReference>
<dbReference type="Pfam" id="PF00466">
    <property type="entry name" value="Ribosomal_L10"/>
    <property type="match status" value="1"/>
</dbReference>
<dbReference type="SUPFAM" id="SSF160369">
    <property type="entry name" value="Ribosomal protein L10-like"/>
    <property type="match status" value="1"/>
</dbReference>
<dbReference type="PROSITE" id="PS01109">
    <property type="entry name" value="RIBOSOMAL_L10"/>
    <property type="match status" value="1"/>
</dbReference>
<organism>
    <name type="scientific">Paenarthrobacter aurescens (strain TC1)</name>
    <dbReference type="NCBI Taxonomy" id="290340"/>
    <lineage>
        <taxon>Bacteria</taxon>
        <taxon>Bacillati</taxon>
        <taxon>Actinomycetota</taxon>
        <taxon>Actinomycetes</taxon>
        <taxon>Micrococcales</taxon>
        <taxon>Micrococcaceae</taxon>
        <taxon>Paenarthrobacter</taxon>
    </lineage>
</organism>
<name>RL10_PAEAT</name>
<accession>A1R8V8</accession>
<protein>
    <recommendedName>
        <fullName evidence="1">Large ribosomal subunit protein uL10</fullName>
    </recommendedName>
    <alternativeName>
        <fullName evidence="3">50S ribosomal protein L10</fullName>
    </alternativeName>
</protein>
<gene>
    <name evidence="1" type="primary">rplJ</name>
    <name type="ordered locus">AAur_2961</name>
</gene>
<keyword id="KW-0687">Ribonucleoprotein</keyword>
<keyword id="KW-0689">Ribosomal protein</keyword>
<keyword id="KW-0694">RNA-binding</keyword>
<keyword id="KW-0699">rRNA-binding</keyword>
<sequence length="197" mass="20031">MTTPSKISAVAEITNDFKESNAAVLTEYRGLTVAQLKELRVALGQDTKFSVVKNTLSAIAAKEAGVEAFNDQLAGPTAIAFIKGDAVAAAKSLTDFAKANKQLVIKTGVFEGKALDAAGVAALAALESRELQLARVAGVLKAPASAAARIIDALRLKLEEEGGASAPAAEEAPAAEEAAAEEVAAPAEAAEAATEEN</sequence>
<proteinExistence type="inferred from homology"/>